<gene>
    <name type="primary">EFG1</name>
    <name type="ordered locus">ABR143C</name>
</gene>
<keyword id="KW-0175">Coiled coil</keyword>
<keyword id="KW-0539">Nucleus</keyword>
<keyword id="KW-1185">Reference proteome</keyword>
<keyword id="KW-0698">rRNA processing</keyword>
<dbReference type="EMBL" id="AE016815">
    <property type="protein sequence ID" value="AAS50914.3"/>
    <property type="molecule type" value="Genomic_DNA"/>
</dbReference>
<dbReference type="RefSeq" id="NP_983090.3">
    <property type="nucleotide sequence ID" value="NM_208443.3"/>
</dbReference>
<dbReference type="SMR" id="Q75D81"/>
<dbReference type="FunCoup" id="Q75D81">
    <property type="interactions" value="185"/>
</dbReference>
<dbReference type="STRING" id="284811.Q75D81"/>
<dbReference type="EnsemblFungi" id="AAS50914">
    <property type="protein sequence ID" value="AAS50914"/>
    <property type="gene ID" value="AGOS_ABR143C"/>
</dbReference>
<dbReference type="GeneID" id="4619200"/>
<dbReference type="KEGG" id="ago:AGOS_ABR143C"/>
<dbReference type="eggNOG" id="KOG4484">
    <property type="taxonomic scope" value="Eukaryota"/>
</dbReference>
<dbReference type="HOGENOM" id="CLU_066912_2_0_1"/>
<dbReference type="InParanoid" id="Q75D81"/>
<dbReference type="OMA" id="KPHRIQE"/>
<dbReference type="OrthoDB" id="47732at2759"/>
<dbReference type="Proteomes" id="UP000000591">
    <property type="component" value="Chromosome II"/>
</dbReference>
<dbReference type="GO" id="GO:0005730">
    <property type="term" value="C:nucleolus"/>
    <property type="evidence" value="ECO:0007669"/>
    <property type="project" value="UniProtKB-SubCell"/>
</dbReference>
<dbReference type="GO" id="GO:0030688">
    <property type="term" value="C:preribosome, small subunit precursor"/>
    <property type="evidence" value="ECO:0007669"/>
    <property type="project" value="EnsemblFungi"/>
</dbReference>
<dbReference type="GO" id="GO:0000462">
    <property type="term" value="P:maturation of SSU-rRNA from tricistronic rRNA transcript (SSU-rRNA, 5.8S rRNA, LSU-rRNA)"/>
    <property type="evidence" value="ECO:0000318"/>
    <property type="project" value="GO_Central"/>
</dbReference>
<dbReference type="GO" id="GO:0071027">
    <property type="term" value="P:nuclear RNA surveillance"/>
    <property type="evidence" value="ECO:0007669"/>
    <property type="project" value="EnsemblFungi"/>
</dbReference>
<dbReference type="GO" id="GO:0000321">
    <property type="term" value="P:re-entry into mitotic cell cycle after pheromone arrest"/>
    <property type="evidence" value="ECO:0007669"/>
    <property type="project" value="EnsemblFungi"/>
</dbReference>
<dbReference type="InterPro" id="IPR019310">
    <property type="entry name" value="Efg1"/>
</dbReference>
<dbReference type="InterPro" id="IPR050786">
    <property type="entry name" value="EFG1_rRNA-proc"/>
</dbReference>
<dbReference type="PANTHER" id="PTHR33911">
    <property type="entry name" value="RRNA-PROCESSING PROTEIN EFG1"/>
    <property type="match status" value="1"/>
</dbReference>
<dbReference type="PANTHER" id="PTHR33911:SF1">
    <property type="entry name" value="RRNA-PROCESSING PROTEIN EFG1"/>
    <property type="match status" value="1"/>
</dbReference>
<dbReference type="Pfam" id="PF10153">
    <property type="entry name" value="Efg1"/>
    <property type="match status" value="1"/>
</dbReference>
<feature type="chain" id="PRO_0000330258" description="rRNA-processing protein EFG1">
    <location>
        <begin position="1"/>
        <end position="221"/>
    </location>
</feature>
<feature type="region of interest" description="Disordered" evidence="3">
    <location>
        <begin position="189"/>
        <end position="221"/>
    </location>
</feature>
<feature type="coiled-coil region" evidence="2">
    <location>
        <begin position="28"/>
        <end position="81"/>
    </location>
</feature>
<feature type="compositionally biased region" description="Acidic residues" evidence="3">
    <location>
        <begin position="211"/>
        <end position="221"/>
    </location>
</feature>
<proteinExistence type="inferred from homology"/>
<reference key="1">
    <citation type="journal article" date="2004" name="Science">
        <title>The Ashbya gossypii genome as a tool for mapping the ancient Saccharomyces cerevisiae genome.</title>
        <authorList>
            <person name="Dietrich F.S."/>
            <person name="Voegeli S."/>
            <person name="Brachat S."/>
            <person name="Lerch A."/>
            <person name="Gates K."/>
            <person name="Steiner S."/>
            <person name="Mohr C."/>
            <person name="Poehlmann R."/>
            <person name="Luedi P."/>
            <person name="Choi S."/>
            <person name="Wing R.A."/>
            <person name="Flavier A."/>
            <person name="Gaffney T.D."/>
            <person name="Philippsen P."/>
        </authorList>
    </citation>
    <scope>NUCLEOTIDE SEQUENCE [LARGE SCALE GENOMIC DNA]</scope>
    <source>
        <strain>ATCC 10895 / CBS 109.51 / FGSC 9923 / NRRL Y-1056</strain>
    </source>
</reference>
<reference key="2">
    <citation type="journal article" date="2013" name="G3 (Bethesda)">
        <title>Genomes of Ashbya fungi isolated from insects reveal four mating-type loci, numerous translocations, lack of transposons, and distinct gene duplications.</title>
        <authorList>
            <person name="Dietrich F.S."/>
            <person name="Voegeli S."/>
            <person name="Kuo S."/>
            <person name="Philippsen P."/>
        </authorList>
    </citation>
    <scope>GENOME REANNOTATION</scope>
    <scope>SEQUENCE REVISION</scope>
    <source>
        <strain>ATCC 10895 / CBS 109.51 / FGSC 9923 / NRRL Y-1056</strain>
    </source>
</reference>
<name>EFG1P_EREGS</name>
<sequence>MANLKSARHRKAAYDSSLQLANALGAGANKIKKQIRNVERLLAKKRDTLPDTVIVEKERTLEALRLELASAEKRALARKNAKKYHMVRFFERKKATRRYKQALKKVETSAGDDAALTDLRQRELELCYVVNFPKTTKYIALYPVEEDPEAAKETAAKRDAFLKVVAKQLSEGTLPVPLEQILKGKKLNKESTGISVSDSEDEEEPGRNEEAHEEEEDDFFE</sequence>
<evidence type="ECO:0000250" key="1"/>
<evidence type="ECO:0000255" key="2"/>
<evidence type="ECO:0000256" key="3">
    <source>
        <dbReference type="SAM" id="MobiDB-lite"/>
    </source>
</evidence>
<evidence type="ECO:0000305" key="4"/>
<accession>Q75D81</accession>
<organism>
    <name type="scientific">Eremothecium gossypii (strain ATCC 10895 / CBS 109.51 / FGSC 9923 / NRRL Y-1056)</name>
    <name type="common">Yeast</name>
    <name type="synonym">Ashbya gossypii</name>
    <dbReference type="NCBI Taxonomy" id="284811"/>
    <lineage>
        <taxon>Eukaryota</taxon>
        <taxon>Fungi</taxon>
        <taxon>Dikarya</taxon>
        <taxon>Ascomycota</taxon>
        <taxon>Saccharomycotina</taxon>
        <taxon>Saccharomycetes</taxon>
        <taxon>Saccharomycetales</taxon>
        <taxon>Saccharomycetaceae</taxon>
        <taxon>Eremothecium</taxon>
    </lineage>
</organism>
<comment type="function">
    <text evidence="1">Involved in rRNA processing.</text>
</comment>
<comment type="subcellular location">
    <subcellularLocation>
        <location evidence="1">Nucleus</location>
        <location evidence="1">Nucleolus</location>
    </subcellularLocation>
</comment>
<comment type="similarity">
    <text evidence="4">Belongs to the EFG1 family.</text>
</comment>
<protein>
    <recommendedName>
        <fullName>rRNA-processing protein EFG1</fullName>
    </recommendedName>
</protein>